<name>Y074_STAAS</name>
<protein>
    <recommendedName>
        <fullName>Uncharacterized lipoprotein SAS0074</fullName>
    </recommendedName>
</protein>
<evidence type="ECO:0000255" key="1">
    <source>
        <dbReference type="PROSITE-ProRule" id="PRU00303"/>
    </source>
</evidence>
<evidence type="ECO:0000305" key="2"/>
<accession>Q6GD25</accession>
<sequence length="254" mass="29565">MKRLKKIVLCISFLFLTIFIGGCGMGKEAEIKKSFEKTLSMYPIKNLEDLYDKEGYRDDQFDKKDKGTWIINSEMATQNKGEALKIKGMVLYMNRNTKTTKGYYYVNAIKNDKDGRPQENEKRYPVKMIDNKVIPTKEIKDENIKTEIKNFKFFVQYGNFKDLKNYKDGDISYNPEAPIYSAKYQLTNDDYNVKQLRERYDIPTNKAPKLLLKGSGNLKGSSVGYKNIEFTFVEEKGKNIYFSDSLDYKKSGEV</sequence>
<gene>
    <name type="ordered locus">SAS0074</name>
</gene>
<proteinExistence type="inferred from homology"/>
<keyword id="KW-1003">Cell membrane</keyword>
<keyword id="KW-0449">Lipoprotein</keyword>
<keyword id="KW-0472">Membrane</keyword>
<keyword id="KW-0564">Palmitate</keyword>
<keyword id="KW-0732">Signal</keyword>
<comment type="subcellular location">
    <subcellularLocation>
        <location evidence="1">Cell membrane</location>
        <topology evidence="1">Lipid-anchor</topology>
    </subcellularLocation>
</comment>
<comment type="similarity">
    <text evidence="2">Belongs to the staphylococcal tandem lipoprotein family.</text>
</comment>
<dbReference type="EMBL" id="BX571857">
    <property type="protein sequence ID" value="CAG41841.1"/>
    <property type="molecule type" value="Genomic_DNA"/>
</dbReference>
<dbReference type="RefSeq" id="WP_001793247.1">
    <property type="nucleotide sequence ID" value="NC_002953.3"/>
</dbReference>
<dbReference type="SMR" id="Q6GD25"/>
<dbReference type="KEGG" id="sas:SAS0074"/>
<dbReference type="HOGENOM" id="CLU_071589_0_1_9"/>
<dbReference type="GO" id="GO:0005886">
    <property type="term" value="C:plasma membrane"/>
    <property type="evidence" value="ECO:0007669"/>
    <property type="project" value="UniProtKB-SubCell"/>
</dbReference>
<dbReference type="Gene3D" id="2.50.20.40">
    <property type="match status" value="1"/>
</dbReference>
<dbReference type="InterPro" id="IPR007595">
    <property type="entry name" value="Csa"/>
</dbReference>
<dbReference type="InterPro" id="IPR038641">
    <property type="entry name" value="Csa_sf"/>
</dbReference>
<dbReference type="NCBIfam" id="TIGR01742">
    <property type="entry name" value="SA_tandem_lipo"/>
    <property type="match status" value="1"/>
</dbReference>
<dbReference type="Pfam" id="PF04507">
    <property type="entry name" value="DUF576"/>
    <property type="match status" value="1"/>
</dbReference>
<dbReference type="PROSITE" id="PS51257">
    <property type="entry name" value="PROKAR_LIPOPROTEIN"/>
    <property type="match status" value="1"/>
</dbReference>
<reference key="1">
    <citation type="journal article" date="2004" name="Proc. Natl. Acad. Sci. U.S.A.">
        <title>Complete genomes of two clinical Staphylococcus aureus strains: evidence for the rapid evolution of virulence and drug resistance.</title>
        <authorList>
            <person name="Holden M.T.G."/>
            <person name="Feil E.J."/>
            <person name="Lindsay J.A."/>
            <person name="Peacock S.J."/>
            <person name="Day N.P.J."/>
            <person name="Enright M.C."/>
            <person name="Foster T.J."/>
            <person name="Moore C.E."/>
            <person name="Hurst L."/>
            <person name="Atkin R."/>
            <person name="Barron A."/>
            <person name="Bason N."/>
            <person name="Bentley S.D."/>
            <person name="Chillingworth C."/>
            <person name="Chillingworth T."/>
            <person name="Churcher C."/>
            <person name="Clark L."/>
            <person name="Corton C."/>
            <person name="Cronin A."/>
            <person name="Doggett J."/>
            <person name="Dowd L."/>
            <person name="Feltwell T."/>
            <person name="Hance Z."/>
            <person name="Harris B."/>
            <person name="Hauser H."/>
            <person name="Holroyd S."/>
            <person name="Jagels K."/>
            <person name="James K.D."/>
            <person name="Lennard N."/>
            <person name="Line A."/>
            <person name="Mayes R."/>
            <person name="Moule S."/>
            <person name="Mungall K."/>
            <person name="Ormond D."/>
            <person name="Quail M.A."/>
            <person name="Rabbinowitsch E."/>
            <person name="Rutherford K.M."/>
            <person name="Sanders M."/>
            <person name="Sharp S."/>
            <person name="Simmonds M."/>
            <person name="Stevens K."/>
            <person name="Whitehead S."/>
            <person name="Barrell B.G."/>
            <person name="Spratt B.G."/>
            <person name="Parkhill J."/>
        </authorList>
    </citation>
    <scope>NUCLEOTIDE SEQUENCE [LARGE SCALE GENOMIC DNA]</scope>
    <source>
        <strain>MSSA476</strain>
    </source>
</reference>
<organism>
    <name type="scientific">Staphylococcus aureus (strain MSSA476)</name>
    <dbReference type="NCBI Taxonomy" id="282459"/>
    <lineage>
        <taxon>Bacteria</taxon>
        <taxon>Bacillati</taxon>
        <taxon>Bacillota</taxon>
        <taxon>Bacilli</taxon>
        <taxon>Bacillales</taxon>
        <taxon>Staphylococcaceae</taxon>
        <taxon>Staphylococcus</taxon>
    </lineage>
</organism>
<feature type="signal peptide" evidence="1">
    <location>
        <begin position="1"/>
        <end position="22"/>
    </location>
</feature>
<feature type="chain" id="PRO_0000282161" description="Uncharacterized lipoprotein SAS0074">
    <location>
        <begin position="23"/>
        <end position="254"/>
    </location>
</feature>
<feature type="lipid moiety-binding region" description="N-palmitoyl cysteine" evidence="1">
    <location>
        <position position="23"/>
    </location>
</feature>
<feature type="lipid moiety-binding region" description="S-diacylglycerol cysteine" evidence="1">
    <location>
        <position position="23"/>
    </location>
</feature>